<comment type="function">
    <text evidence="1">The phosphoenolpyruvate-dependent sugar phosphotransferase system (sugar PTS), a major carbohydrate active transport system, catalyzes the phosphorylation of incoming sugar substrates concomitantly with their translocation across the cell membrane. The enzyme II LacEF PTS system is involved in lactose transport.</text>
</comment>
<comment type="cofactor">
    <cofactor evidence="2">
        <name>Mg(2+)</name>
        <dbReference type="ChEBI" id="CHEBI:18420"/>
    </cofactor>
    <text evidence="2">Binds 1 Mg(2+) ion per trimer.</text>
</comment>
<comment type="subunit">
    <text evidence="1">Homotrimer.</text>
</comment>
<comment type="subcellular location">
    <subcellularLocation>
        <location evidence="4">Cytoplasm</location>
    </subcellularLocation>
</comment>
<comment type="induction">
    <text evidence="1">Induced by lactose, galactose and galactose-6-P. Repressed by glucose.</text>
</comment>
<comment type="domain">
    <text evidence="3">The PTS EIIA type-3 domain is phosphorylated by phospho-HPr on a histidyl residue. Then, it transfers the phosphoryl group to the PTS EIIB type-3 domain.</text>
</comment>
<organism>
    <name type="scientific">Staphylococcus aureus (strain N315)</name>
    <dbReference type="NCBI Taxonomy" id="158879"/>
    <lineage>
        <taxon>Bacteria</taxon>
        <taxon>Bacillati</taxon>
        <taxon>Bacillota</taxon>
        <taxon>Bacilli</taxon>
        <taxon>Bacillales</taxon>
        <taxon>Staphylococcaceae</taxon>
        <taxon>Staphylococcus</taxon>
    </lineage>
</organism>
<accession>P0A0D4</accession>
<accession>P02909</accession>
<evidence type="ECO:0000250" key="1">
    <source>
        <dbReference type="UniProtKB" id="P0A0D6"/>
    </source>
</evidence>
<evidence type="ECO:0000250" key="2">
    <source>
        <dbReference type="UniProtKB" id="P23532"/>
    </source>
</evidence>
<evidence type="ECO:0000255" key="3">
    <source>
        <dbReference type="PROSITE-ProRule" id="PRU00418"/>
    </source>
</evidence>
<evidence type="ECO:0000305" key="4"/>
<dbReference type="EMBL" id="BA000018">
    <property type="protein sequence ID" value="BAB43283.1"/>
    <property type="molecule type" value="Genomic_DNA"/>
</dbReference>
<dbReference type="PIR" id="B90015">
    <property type="entry name" value="B90015"/>
</dbReference>
<dbReference type="RefSeq" id="WP_001078309.1">
    <property type="nucleotide sequence ID" value="NC_002745.2"/>
</dbReference>
<dbReference type="SMR" id="P0A0D4"/>
<dbReference type="EnsemblBacteria" id="BAB43283">
    <property type="protein sequence ID" value="BAB43283"/>
    <property type="gene ID" value="BAB43283"/>
</dbReference>
<dbReference type="KEGG" id="sau:SA1993"/>
<dbReference type="HOGENOM" id="CLU_152490_1_0_9"/>
<dbReference type="GO" id="GO:0005737">
    <property type="term" value="C:cytoplasm"/>
    <property type="evidence" value="ECO:0007669"/>
    <property type="project" value="UniProtKB-SubCell"/>
</dbReference>
<dbReference type="GO" id="GO:0046872">
    <property type="term" value="F:metal ion binding"/>
    <property type="evidence" value="ECO:0007669"/>
    <property type="project" value="UniProtKB-KW"/>
</dbReference>
<dbReference type="GO" id="GO:0016740">
    <property type="term" value="F:transferase activity"/>
    <property type="evidence" value="ECO:0007669"/>
    <property type="project" value="UniProtKB-KW"/>
</dbReference>
<dbReference type="GO" id="GO:0009401">
    <property type="term" value="P:phosphoenolpyruvate-dependent sugar phosphotransferase system"/>
    <property type="evidence" value="ECO:0007669"/>
    <property type="project" value="UniProtKB-KW"/>
</dbReference>
<dbReference type="CDD" id="cd00215">
    <property type="entry name" value="PTS_IIA_lac"/>
    <property type="match status" value="1"/>
</dbReference>
<dbReference type="Gene3D" id="1.20.58.80">
    <property type="entry name" value="Phosphotransferase system, lactose/cellobiose-type IIA subunit"/>
    <property type="match status" value="1"/>
</dbReference>
<dbReference type="InterPro" id="IPR003188">
    <property type="entry name" value="PTS_IIA_lac/cel"/>
</dbReference>
<dbReference type="InterPro" id="IPR036542">
    <property type="entry name" value="PTS_IIA_lac/cel_sf"/>
</dbReference>
<dbReference type="NCBIfam" id="TIGR00823">
    <property type="entry name" value="EIIA-LAC"/>
    <property type="match status" value="1"/>
</dbReference>
<dbReference type="PANTHER" id="PTHR34382:SF9">
    <property type="entry name" value="PHOSPHOTRANSFERASE SYSTEM SUGAR-SPECIFIC EII COMPONENT"/>
    <property type="match status" value="1"/>
</dbReference>
<dbReference type="PANTHER" id="PTHR34382">
    <property type="entry name" value="PTS SYSTEM N,N'-DIACETYLCHITOBIOSE-SPECIFIC EIIA COMPONENT"/>
    <property type="match status" value="1"/>
</dbReference>
<dbReference type="Pfam" id="PF02255">
    <property type="entry name" value="PTS_IIA"/>
    <property type="match status" value="1"/>
</dbReference>
<dbReference type="PIRSF" id="PIRSF000699">
    <property type="entry name" value="PTS_IILac_III"/>
    <property type="match status" value="1"/>
</dbReference>
<dbReference type="SUPFAM" id="SSF46973">
    <property type="entry name" value="Enzyme IIa from lactose specific PTS, IIa-lac"/>
    <property type="match status" value="1"/>
</dbReference>
<dbReference type="PROSITE" id="PS51095">
    <property type="entry name" value="PTS_EIIA_TYPE_3"/>
    <property type="match status" value="1"/>
</dbReference>
<reference key="1">
    <citation type="journal article" date="2001" name="Lancet">
        <title>Whole genome sequencing of meticillin-resistant Staphylococcus aureus.</title>
        <authorList>
            <person name="Kuroda M."/>
            <person name="Ohta T."/>
            <person name="Uchiyama I."/>
            <person name="Baba T."/>
            <person name="Yuzawa H."/>
            <person name="Kobayashi I."/>
            <person name="Cui L."/>
            <person name="Oguchi A."/>
            <person name="Aoki K."/>
            <person name="Nagai Y."/>
            <person name="Lian J.-Q."/>
            <person name="Ito T."/>
            <person name="Kanamori M."/>
            <person name="Matsumaru H."/>
            <person name="Maruyama A."/>
            <person name="Murakami H."/>
            <person name="Hosoyama A."/>
            <person name="Mizutani-Ui Y."/>
            <person name="Takahashi N.K."/>
            <person name="Sawano T."/>
            <person name="Inoue R."/>
            <person name="Kaito C."/>
            <person name="Sekimizu K."/>
            <person name="Hirakawa H."/>
            <person name="Kuhara S."/>
            <person name="Goto S."/>
            <person name="Yabuzaki J."/>
            <person name="Kanehisa M."/>
            <person name="Yamashita A."/>
            <person name="Oshima K."/>
            <person name="Furuya K."/>
            <person name="Yoshino C."/>
            <person name="Shiba T."/>
            <person name="Hattori M."/>
            <person name="Ogasawara N."/>
            <person name="Hayashi H."/>
            <person name="Hiramatsu K."/>
        </authorList>
    </citation>
    <scope>NUCLEOTIDE SEQUENCE [LARGE SCALE GENOMIC DNA]</scope>
    <source>
        <strain>N315</strain>
    </source>
</reference>
<feature type="chain" id="PRO_0000186600" description="PTS system lactose-specific EIIA component">
    <location>
        <begin position="1"/>
        <end position="103"/>
    </location>
</feature>
<feature type="domain" description="PTS EIIA type-3" evidence="3">
    <location>
        <begin position="4"/>
        <end position="102"/>
    </location>
</feature>
<feature type="active site" description="Tele-phosphohistidine intermediate" evidence="1">
    <location>
        <position position="78"/>
    </location>
</feature>
<feature type="binding site" evidence="2">
    <location>
        <position position="81"/>
    </location>
    <ligand>
        <name>Mg(2+)</name>
        <dbReference type="ChEBI" id="CHEBI:18420"/>
        <note>ligand shared between all trimeric partners</note>
    </ligand>
</feature>
<feature type="modified residue" description="Phosphohistidine; by HPr" evidence="1 3">
    <location>
        <position position="78"/>
    </location>
</feature>
<name>PTLA_STAAN</name>
<keyword id="KW-0963">Cytoplasm</keyword>
<keyword id="KW-0460">Magnesium</keyword>
<keyword id="KW-0479">Metal-binding</keyword>
<keyword id="KW-0597">Phosphoprotein</keyword>
<keyword id="KW-0598">Phosphotransferase system</keyword>
<keyword id="KW-0762">Sugar transport</keyword>
<keyword id="KW-0808">Transferase</keyword>
<keyword id="KW-0813">Transport</keyword>
<protein>
    <recommendedName>
        <fullName evidence="1">PTS system lactose-specific EIIA component</fullName>
    </recommendedName>
    <alternativeName>
        <fullName evidence="1">EIIA-Lac</fullName>
    </alternativeName>
    <alternativeName>
        <fullName evidence="1">EIII-Lac</fullName>
    </alternativeName>
    <alternativeName>
        <fullName evidence="1">Lactose-specific phosphotransferase enzyme IIA component</fullName>
    </alternativeName>
</protein>
<proteinExistence type="inferred from homology"/>
<gene>
    <name evidence="1" type="primary">lacF</name>
    <name type="ordered locus">SA1993</name>
</gene>
<sequence length="103" mass="11370">MNREEVQLLGFEIVAFAGDARSKFLEALTAAQAGDFAKADALIEEGNNCIAEAHRAQTSLLAKEAQGDDIAYSVTMMHGQDHLMTTILLKDLMKHLLEFYKRG</sequence>